<feature type="chain" id="PRO_1000211975" description="Large ribosomal subunit protein eL37">
    <location>
        <begin position="1"/>
        <end position="63"/>
    </location>
</feature>
<feature type="zinc finger region" description="C4-type" evidence="1">
    <location>
        <begin position="20"/>
        <end position="38"/>
    </location>
</feature>
<feature type="binding site" evidence="1">
    <location>
        <position position="20"/>
    </location>
    <ligand>
        <name>Zn(2+)</name>
        <dbReference type="ChEBI" id="CHEBI:29105"/>
    </ligand>
</feature>
<feature type="binding site" evidence="1">
    <location>
        <position position="23"/>
    </location>
    <ligand>
        <name>Zn(2+)</name>
        <dbReference type="ChEBI" id="CHEBI:29105"/>
    </ligand>
</feature>
<feature type="binding site" evidence="1">
    <location>
        <position position="35"/>
    </location>
    <ligand>
        <name>Zn(2+)</name>
        <dbReference type="ChEBI" id="CHEBI:29105"/>
    </ligand>
</feature>
<feature type="binding site" evidence="1">
    <location>
        <position position="38"/>
    </location>
    <ligand>
        <name>Zn(2+)</name>
        <dbReference type="ChEBI" id="CHEBI:29105"/>
    </ligand>
</feature>
<dbReference type="EMBL" id="CP001398">
    <property type="protein sequence ID" value="ACS34241.1"/>
    <property type="molecule type" value="Genomic_DNA"/>
</dbReference>
<dbReference type="RefSeq" id="WP_015859350.1">
    <property type="nucleotide sequence ID" value="NC_012804.1"/>
</dbReference>
<dbReference type="SMR" id="C5A1H2"/>
<dbReference type="STRING" id="593117.TGAM_1739"/>
<dbReference type="PaxDb" id="593117-TGAM_1739"/>
<dbReference type="GeneID" id="7987458"/>
<dbReference type="KEGG" id="tga:TGAM_1739"/>
<dbReference type="PATRIC" id="fig|593117.10.peg.1746"/>
<dbReference type="eggNOG" id="arCOG04126">
    <property type="taxonomic scope" value="Archaea"/>
</dbReference>
<dbReference type="HOGENOM" id="CLU_208825_0_0_2"/>
<dbReference type="OrthoDB" id="5619at2157"/>
<dbReference type="Proteomes" id="UP000001488">
    <property type="component" value="Chromosome"/>
</dbReference>
<dbReference type="GO" id="GO:0022625">
    <property type="term" value="C:cytosolic large ribosomal subunit"/>
    <property type="evidence" value="ECO:0007669"/>
    <property type="project" value="TreeGrafter"/>
</dbReference>
<dbReference type="GO" id="GO:0019843">
    <property type="term" value="F:rRNA binding"/>
    <property type="evidence" value="ECO:0007669"/>
    <property type="project" value="UniProtKB-KW"/>
</dbReference>
<dbReference type="GO" id="GO:0003735">
    <property type="term" value="F:structural constituent of ribosome"/>
    <property type="evidence" value="ECO:0007669"/>
    <property type="project" value="InterPro"/>
</dbReference>
<dbReference type="GO" id="GO:0008270">
    <property type="term" value="F:zinc ion binding"/>
    <property type="evidence" value="ECO:0007669"/>
    <property type="project" value="UniProtKB-UniRule"/>
</dbReference>
<dbReference type="GO" id="GO:0006412">
    <property type="term" value="P:translation"/>
    <property type="evidence" value="ECO:0007669"/>
    <property type="project" value="UniProtKB-UniRule"/>
</dbReference>
<dbReference type="FunFam" id="2.20.25.30:FF:000003">
    <property type="entry name" value="50S ribosomal protein L37e"/>
    <property type="match status" value="1"/>
</dbReference>
<dbReference type="Gene3D" id="2.20.25.30">
    <property type="match status" value="1"/>
</dbReference>
<dbReference type="HAMAP" id="MF_00547">
    <property type="entry name" value="Ribosomal_eL37"/>
    <property type="match status" value="1"/>
</dbReference>
<dbReference type="InterPro" id="IPR001569">
    <property type="entry name" value="Ribosomal_eL37"/>
</dbReference>
<dbReference type="InterPro" id="IPR011331">
    <property type="entry name" value="Ribosomal_eL37/eL43"/>
</dbReference>
<dbReference type="InterPro" id="IPR018267">
    <property type="entry name" value="Ribosomal_eL37_CS"/>
</dbReference>
<dbReference type="InterPro" id="IPR011332">
    <property type="entry name" value="Ribosomal_zn-bd"/>
</dbReference>
<dbReference type="NCBIfam" id="NF003214">
    <property type="entry name" value="PRK04179.1"/>
    <property type="match status" value="1"/>
</dbReference>
<dbReference type="PANTHER" id="PTHR10768">
    <property type="entry name" value="60S RIBOSOMAL PROTEIN L37"/>
    <property type="match status" value="1"/>
</dbReference>
<dbReference type="PANTHER" id="PTHR10768:SF0">
    <property type="entry name" value="RIBOSOMAL PROTEIN L37"/>
    <property type="match status" value="1"/>
</dbReference>
<dbReference type="Pfam" id="PF01907">
    <property type="entry name" value="Ribosomal_L37e"/>
    <property type="match status" value="1"/>
</dbReference>
<dbReference type="SUPFAM" id="SSF57829">
    <property type="entry name" value="Zn-binding ribosomal proteins"/>
    <property type="match status" value="1"/>
</dbReference>
<dbReference type="PROSITE" id="PS01077">
    <property type="entry name" value="RIBOSOMAL_L37E"/>
    <property type="match status" value="1"/>
</dbReference>
<protein>
    <recommendedName>
        <fullName evidence="1">Large ribosomal subunit protein eL37</fullName>
    </recommendedName>
    <alternativeName>
        <fullName evidence="2">50S ribosomal protein L37e</fullName>
    </alternativeName>
</protein>
<comment type="function">
    <text evidence="1">Binds to the 23S rRNA.</text>
</comment>
<comment type="cofactor">
    <cofactor evidence="1">
        <name>Zn(2+)</name>
        <dbReference type="ChEBI" id="CHEBI:29105"/>
    </cofactor>
    <text evidence="1">Binds 1 zinc ion per subunit.</text>
</comment>
<comment type="similarity">
    <text evidence="1">Belongs to the eukaryotic ribosomal protein eL37 family.</text>
</comment>
<keyword id="KW-0479">Metal-binding</keyword>
<keyword id="KW-1185">Reference proteome</keyword>
<keyword id="KW-0687">Ribonucleoprotein</keyword>
<keyword id="KW-0689">Ribosomal protein</keyword>
<keyword id="KW-0694">RNA-binding</keyword>
<keyword id="KW-0699">rRNA-binding</keyword>
<keyword id="KW-0862">Zinc</keyword>
<keyword id="KW-0863">Zinc-finger</keyword>
<name>RL37_THEGJ</name>
<organism>
    <name type="scientific">Thermococcus gammatolerans (strain DSM 15229 / JCM 11827 / EJ3)</name>
    <dbReference type="NCBI Taxonomy" id="593117"/>
    <lineage>
        <taxon>Archaea</taxon>
        <taxon>Methanobacteriati</taxon>
        <taxon>Methanobacteriota</taxon>
        <taxon>Thermococci</taxon>
        <taxon>Thermococcales</taxon>
        <taxon>Thermococcaceae</taxon>
        <taxon>Thermococcus</taxon>
    </lineage>
</organism>
<gene>
    <name evidence="1" type="primary">rpl37e</name>
    <name type="ordered locus">TGAM_1739</name>
</gene>
<reference key="1">
    <citation type="journal article" date="2007" name="Genome Biol.">
        <title>Genome analysis and genome-wide proteomics of Thermococcus gammatolerans, the most radioresistant organism known amongst the Archaea.</title>
        <authorList>
            <person name="Zivanovic Y."/>
            <person name="Armengaud J."/>
            <person name="Lagorce A."/>
            <person name="Leplat C."/>
            <person name="Guerin P."/>
            <person name="Dutertre M."/>
            <person name="Anthouard V."/>
            <person name="Forterre P."/>
            <person name="Wincker P."/>
            <person name="Confalonieri F."/>
        </authorList>
    </citation>
    <scope>NUCLEOTIDE SEQUENCE [LARGE SCALE GENOMIC DNA]</scope>
    <source>
        <strain>DSM 15229 / JCM 11827 / EJ3</strain>
    </source>
</reference>
<proteinExistence type="inferred from homology"/>
<accession>C5A1H2</accession>
<evidence type="ECO:0000255" key="1">
    <source>
        <dbReference type="HAMAP-Rule" id="MF_00547"/>
    </source>
</evidence>
<evidence type="ECO:0000305" key="2"/>
<sequence length="63" mass="7420">MGAGTAPKGKRNRTPTHIRCRRCGRRAFNVKKGYCAACGFGRSRRMRKYSWSHKWKKKRNLSY</sequence>